<feature type="chain" id="PRO_0000227608" description="Undecaprenyl-diphosphatase 1">
    <location>
        <begin position="1"/>
        <end position="276"/>
    </location>
</feature>
<feature type="transmembrane region" description="Helical" evidence="1">
    <location>
        <begin position="1"/>
        <end position="21"/>
    </location>
</feature>
<feature type="transmembrane region" description="Helical" evidence="1">
    <location>
        <begin position="44"/>
        <end position="64"/>
    </location>
</feature>
<feature type="transmembrane region" description="Helical" evidence="1">
    <location>
        <begin position="87"/>
        <end position="107"/>
    </location>
</feature>
<feature type="transmembrane region" description="Helical" evidence="1">
    <location>
        <begin position="114"/>
        <end position="134"/>
    </location>
</feature>
<feature type="transmembrane region" description="Helical" evidence="1">
    <location>
        <begin position="150"/>
        <end position="170"/>
    </location>
</feature>
<feature type="transmembrane region" description="Helical" evidence="1">
    <location>
        <begin position="190"/>
        <end position="210"/>
    </location>
</feature>
<feature type="transmembrane region" description="Helical" evidence="1">
    <location>
        <begin position="222"/>
        <end position="242"/>
    </location>
</feature>
<feature type="transmembrane region" description="Helical" evidence="1">
    <location>
        <begin position="251"/>
        <end position="271"/>
    </location>
</feature>
<reference key="1">
    <citation type="journal article" date="2010" name="Genome Biol. Evol.">
        <title>Continuing evolution of Burkholderia mallei through genome reduction and large-scale rearrangements.</title>
        <authorList>
            <person name="Losada L."/>
            <person name="Ronning C.M."/>
            <person name="DeShazer D."/>
            <person name="Woods D."/>
            <person name="Fedorova N."/>
            <person name="Kim H.S."/>
            <person name="Shabalina S.A."/>
            <person name="Pearson T.R."/>
            <person name="Brinkac L."/>
            <person name="Tan P."/>
            <person name="Nandi T."/>
            <person name="Crabtree J."/>
            <person name="Badger J."/>
            <person name="Beckstrom-Sternberg S."/>
            <person name="Saqib M."/>
            <person name="Schutzer S.E."/>
            <person name="Keim P."/>
            <person name="Nierman W.C."/>
        </authorList>
    </citation>
    <scope>NUCLEOTIDE SEQUENCE [LARGE SCALE GENOMIC DNA]</scope>
    <source>
        <strain>1710b</strain>
    </source>
</reference>
<protein>
    <recommendedName>
        <fullName evidence="1">Undecaprenyl-diphosphatase 1</fullName>
        <ecNumber evidence="1">3.6.1.27</ecNumber>
    </recommendedName>
    <alternativeName>
        <fullName evidence="1">Bacitracin resistance protein 1</fullName>
    </alternativeName>
    <alternativeName>
        <fullName evidence="1">Undecaprenyl pyrophosphate phosphatase 1</fullName>
    </alternativeName>
</protein>
<name>UPPP1_BURP1</name>
<comment type="function">
    <text evidence="1">Catalyzes the dephosphorylation of undecaprenyl diphosphate (UPP). Confers resistance to bacitracin.</text>
</comment>
<comment type="catalytic activity">
    <reaction evidence="1">
        <text>di-trans,octa-cis-undecaprenyl diphosphate + H2O = di-trans,octa-cis-undecaprenyl phosphate + phosphate + H(+)</text>
        <dbReference type="Rhea" id="RHEA:28094"/>
        <dbReference type="ChEBI" id="CHEBI:15377"/>
        <dbReference type="ChEBI" id="CHEBI:15378"/>
        <dbReference type="ChEBI" id="CHEBI:43474"/>
        <dbReference type="ChEBI" id="CHEBI:58405"/>
        <dbReference type="ChEBI" id="CHEBI:60392"/>
        <dbReference type="EC" id="3.6.1.27"/>
    </reaction>
</comment>
<comment type="subcellular location">
    <subcellularLocation>
        <location evidence="1">Cell inner membrane</location>
        <topology evidence="1">Multi-pass membrane protein</topology>
    </subcellularLocation>
</comment>
<comment type="miscellaneous">
    <text>Bacitracin is thought to be involved in the inhibition of peptidoglycan synthesis by sequestering undecaprenyl diphosphate, thereby reducing the pool of lipid carrier available.</text>
</comment>
<comment type="similarity">
    <text evidence="1">Belongs to the UppP family.</text>
</comment>
<dbReference type="EC" id="3.6.1.27" evidence="1"/>
<dbReference type="EMBL" id="CP000124">
    <property type="protein sequence ID" value="ABA47658.1"/>
    <property type="molecule type" value="Genomic_DNA"/>
</dbReference>
<dbReference type="RefSeq" id="WP_004521810.1">
    <property type="nucleotide sequence ID" value="NC_007434.1"/>
</dbReference>
<dbReference type="SMR" id="Q3JTI8"/>
<dbReference type="EnsemblBacteria" id="ABA47658">
    <property type="protein sequence ID" value="ABA47658"/>
    <property type="gene ID" value="BURPS1710b_1713"/>
</dbReference>
<dbReference type="KEGG" id="bpm:BURPS1710b_1713"/>
<dbReference type="HOGENOM" id="CLU_060296_1_1_4"/>
<dbReference type="Proteomes" id="UP000002700">
    <property type="component" value="Chromosome I"/>
</dbReference>
<dbReference type="GO" id="GO:0005886">
    <property type="term" value="C:plasma membrane"/>
    <property type="evidence" value="ECO:0007669"/>
    <property type="project" value="UniProtKB-SubCell"/>
</dbReference>
<dbReference type="GO" id="GO:0050380">
    <property type="term" value="F:undecaprenyl-diphosphatase activity"/>
    <property type="evidence" value="ECO:0007669"/>
    <property type="project" value="UniProtKB-UniRule"/>
</dbReference>
<dbReference type="GO" id="GO:0071555">
    <property type="term" value="P:cell wall organization"/>
    <property type="evidence" value="ECO:0007669"/>
    <property type="project" value="UniProtKB-KW"/>
</dbReference>
<dbReference type="GO" id="GO:0009252">
    <property type="term" value="P:peptidoglycan biosynthetic process"/>
    <property type="evidence" value="ECO:0007669"/>
    <property type="project" value="UniProtKB-KW"/>
</dbReference>
<dbReference type="GO" id="GO:0008360">
    <property type="term" value="P:regulation of cell shape"/>
    <property type="evidence" value="ECO:0007669"/>
    <property type="project" value="UniProtKB-KW"/>
</dbReference>
<dbReference type="GO" id="GO:0046677">
    <property type="term" value="P:response to antibiotic"/>
    <property type="evidence" value="ECO:0007669"/>
    <property type="project" value="UniProtKB-UniRule"/>
</dbReference>
<dbReference type="HAMAP" id="MF_01006">
    <property type="entry name" value="Undec_diphosphatase"/>
    <property type="match status" value="1"/>
</dbReference>
<dbReference type="InterPro" id="IPR003824">
    <property type="entry name" value="UppP"/>
</dbReference>
<dbReference type="PANTHER" id="PTHR30622">
    <property type="entry name" value="UNDECAPRENYL-DIPHOSPHATASE"/>
    <property type="match status" value="1"/>
</dbReference>
<dbReference type="PANTHER" id="PTHR30622:SF4">
    <property type="entry name" value="UNDECAPRENYL-DIPHOSPHATASE"/>
    <property type="match status" value="1"/>
</dbReference>
<dbReference type="Pfam" id="PF02673">
    <property type="entry name" value="BacA"/>
    <property type="match status" value="1"/>
</dbReference>
<gene>
    <name evidence="1" type="primary">uppP1</name>
    <name type="ordered locus">BURPS1710b_1713</name>
</gene>
<keyword id="KW-0046">Antibiotic resistance</keyword>
<keyword id="KW-0997">Cell inner membrane</keyword>
<keyword id="KW-1003">Cell membrane</keyword>
<keyword id="KW-0133">Cell shape</keyword>
<keyword id="KW-0961">Cell wall biogenesis/degradation</keyword>
<keyword id="KW-0378">Hydrolase</keyword>
<keyword id="KW-0472">Membrane</keyword>
<keyword id="KW-0573">Peptidoglycan synthesis</keyword>
<keyword id="KW-0812">Transmembrane</keyword>
<keyword id="KW-1133">Transmembrane helix</keyword>
<organism>
    <name type="scientific">Burkholderia pseudomallei (strain 1710b)</name>
    <dbReference type="NCBI Taxonomy" id="320372"/>
    <lineage>
        <taxon>Bacteria</taxon>
        <taxon>Pseudomonadati</taxon>
        <taxon>Pseudomonadota</taxon>
        <taxon>Betaproteobacteria</taxon>
        <taxon>Burkholderiales</taxon>
        <taxon>Burkholderiaceae</taxon>
        <taxon>Burkholderia</taxon>
        <taxon>pseudomallei group</taxon>
    </lineage>
</organism>
<accession>Q3JTI8</accession>
<evidence type="ECO:0000255" key="1">
    <source>
        <dbReference type="HAMAP-Rule" id="MF_01006"/>
    </source>
</evidence>
<sequence>MSLWFLVFLSVLQGVTELFPVSSLGHTLLVPALFGMHIDKHAPQLLPFLVALHLGTALALLWYFRERWIALIAGFFASLNGRKNDEGHLMWALIIGTIPTGLVGLLLEKRIERVFHDLRIVAAALIINGVLLWLGDRIQRARAHRPPEKLTFKQAFFVGLAQVGALIPGFSRSGLTMIAGNAAGLTADKAAEFSFLLGTPIIFAAGLLELPKLFHAPDQLADALLGGVLTAIAAYLSVRFLMRYFEGRGRLASFGLYCVLAGLFCLGWFMFHAQPV</sequence>
<proteinExistence type="inferred from homology"/>